<comment type="function">
    <text evidence="1">General (non sugar-specific) component of the phosphoenolpyruvate-dependent sugar phosphotransferase system (sugar PTS). This major carbohydrate active-transport system catalyzes the phosphorylation of incoming sugar substrates concomitantly with their translocation across the cell membrane. The phosphoryl group from phosphoenolpyruvate (PEP) is transferred to the phosphoryl carrier protein HPr by enzyme I. Phospho-HPr then transfers it to the PTS EIIA domain.</text>
</comment>
<comment type="subcellular location">
    <subcellularLocation>
        <location evidence="1">Cytoplasm</location>
    </subcellularLocation>
</comment>
<comment type="similarity">
    <text evidence="3">Belongs to the HPr family.</text>
</comment>
<sequence>MPAREITIINKLGLHARAAAKFVGVAGRFPCQVPVGRAPDKLVDGKSIMAVMMLAAGKGTQVHLHTXGEQDSDAMDALVELINNFFDEGE</sequence>
<evidence type="ECO:0000250" key="1"/>
<evidence type="ECO:0000255" key="2">
    <source>
        <dbReference type="PROSITE-ProRule" id="PRU00681"/>
    </source>
</evidence>
<evidence type="ECO:0000305" key="3"/>
<protein>
    <recommendedName>
        <fullName>Phosphocarrier protein HPr</fullName>
    </recommendedName>
    <alternativeName>
        <fullName>Histidine-containing protein</fullName>
    </alternativeName>
</protein>
<dbReference type="EMBL" id="AJ007699">
    <property type="protein sequence ID" value="CAA07606.1"/>
    <property type="molecule type" value="Genomic_DNA"/>
</dbReference>
<dbReference type="eggNOG" id="COG1925">
    <property type="taxonomic scope" value="Bacteria"/>
</dbReference>
<dbReference type="GO" id="GO:0005737">
    <property type="term" value="C:cytoplasm"/>
    <property type="evidence" value="ECO:0007669"/>
    <property type="project" value="UniProtKB-SubCell"/>
</dbReference>
<dbReference type="GO" id="GO:0009401">
    <property type="term" value="P:phosphoenolpyruvate-dependent sugar phosphotransferase system"/>
    <property type="evidence" value="ECO:0007669"/>
    <property type="project" value="UniProtKB-KW"/>
</dbReference>
<dbReference type="CDD" id="cd00367">
    <property type="entry name" value="PTS-HPr_like"/>
    <property type="match status" value="1"/>
</dbReference>
<dbReference type="Gene3D" id="3.30.1340.10">
    <property type="entry name" value="HPr-like"/>
    <property type="match status" value="1"/>
</dbReference>
<dbReference type="InterPro" id="IPR050399">
    <property type="entry name" value="HPr"/>
</dbReference>
<dbReference type="InterPro" id="IPR000032">
    <property type="entry name" value="HPr-like"/>
</dbReference>
<dbReference type="InterPro" id="IPR035895">
    <property type="entry name" value="HPr-like_sf"/>
</dbReference>
<dbReference type="InterPro" id="IPR001020">
    <property type="entry name" value="PTS_HPr_His_P_site"/>
</dbReference>
<dbReference type="InterPro" id="IPR002114">
    <property type="entry name" value="PTS_HPr_Ser_P_site"/>
</dbReference>
<dbReference type="NCBIfam" id="TIGR01003">
    <property type="entry name" value="PTS_HPr_family"/>
    <property type="match status" value="1"/>
</dbReference>
<dbReference type="PANTHER" id="PTHR33705">
    <property type="entry name" value="PHOSPHOCARRIER PROTEIN HPR"/>
    <property type="match status" value="1"/>
</dbReference>
<dbReference type="PANTHER" id="PTHR33705:SF2">
    <property type="entry name" value="PHOSPHOCARRIER PROTEIN NPR"/>
    <property type="match status" value="1"/>
</dbReference>
<dbReference type="Pfam" id="PF00381">
    <property type="entry name" value="PTS-HPr"/>
    <property type="match status" value="1"/>
</dbReference>
<dbReference type="PRINTS" id="PR00107">
    <property type="entry name" value="PHOSPHOCPHPR"/>
</dbReference>
<dbReference type="SUPFAM" id="SSF55594">
    <property type="entry name" value="HPr-like"/>
    <property type="match status" value="1"/>
</dbReference>
<dbReference type="PROSITE" id="PS51350">
    <property type="entry name" value="PTS_HPR_DOM"/>
    <property type="match status" value="1"/>
</dbReference>
<dbReference type="PROSITE" id="PS00369">
    <property type="entry name" value="PTS_HPR_HIS"/>
    <property type="match status" value="1"/>
</dbReference>
<dbReference type="PROSITE" id="PS00589">
    <property type="entry name" value="PTS_HPR_SER"/>
    <property type="match status" value="1"/>
</dbReference>
<name>PTHP_PSEPU</name>
<gene>
    <name type="primary">ptsH</name>
    <name type="synonym">ptsO</name>
</gene>
<keyword id="KW-0963">Cytoplasm</keyword>
<keyword id="KW-0598">Phosphotransferase system</keyword>
<keyword id="KW-0762">Sugar transport</keyword>
<keyword id="KW-0813">Transport</keyword>
<reference key="1">
    <citation type="submission" date="1998-08" db="EMBL/GenBank/DDBJ databases">
        <authorList>
            <person name="Cases I."/>
        </authorList>
    </citation>
    <scope>NUCLEOTIDE SEQUENCE [GENOMIC DNA]</scope>
</reference>
<organism>
    <name type="scientific">Pseudomonas putida</name>
    <name type="common">Arthrobacter siderocapsulatus</name>
    <dbReference type="NCBI Taxonomy" id="303"/>
    <lineage>
        <taxon>Bacteria</taxon>
        <taxon>Pseudomonadati</taxon>
        <taxon>Pseudomonadota</taxon>
        <taxon>Gammaproteobacteria</taxon>
        <taxon>Pseudomonadales</taxon>
        <taxon>Pseudomonadaceae</taxon>
        <taxon>Pseudomonas</taxon>
    </lineage>
</organism>
<feature type="chain" id="PRO_0000107868" description="Phosphocarrier protein HPr">
    <location>
        <begin position="1"/>
        <end position="90"/>
    </location>
</feature>
<feature type="domain" description="HPr" evidence="2">
    <location>
        <begin position="1"/>
        <end position="89"/>
    </location>
</feature>
<feature type="active site" description="Pros-phosphohistidine intermediate" evidence="2">
    <location>
        <position position="15"/>
    </location>
</feature>
<accession>Q9Z426</accession>
<proteinExistence type="inferred from homology"/>